<comment type="function">
    <text evidence="1">Releases the supercoiling and torsional tension of DNA, which is introduced during the DNA replication and transcription, by transiently cleaving and rejoining one strand of the DNA duplex. Introduces a single-strand break via transesterification at a target site in duplex DNA. The scissile phosphodiester is attacked by the catalytic tyrosine of the enzyme, resulting in the formation of a DNA-(5'-phosphotyrosyl)-enzyme intermediate and the expulsion of a 3'-OH DNA strand. The free DNA strand then undergoes passage around the unbroken strand, thus removing DNA supercoils. Finally, in the religation step, the DNA 3'-OH attacks the covalent intermediate to expel the active-site tyrosine and restore the DNA phosphodiester backbone.</text>
</comment>
<comment type="catalytic activity">
    <reaction evidence="1">
        <text>ATP-independent breakage of single-stranded DNA, followed by passage and rejoining.</text>
        <dbReference type="EC" id="5.6.2.1"/>
    </reaction>
</comment>
<comment type="cofactor">
    <cofactor evidence="1">
        <name>Mg(2+)</name>
        <dbReference type="ChEBI" id="CHEBI:18420"/>
    </cofactor>
</comment>
<comment type="subunit">
    <text evidence="1">Monomer.</text>
</comment>
<comment type="similarity">
    <text evidence="1">Belongs to the type IA topoisomerase family.</text>
</comment>
<feature type="chain" id="PRO_0000273104" description="DNA topoisomerase 1">
    <location>
        <begin position="1"/>
        <end position="800"/>
    </location>
</feature>
<feature type="domain" description="Toprim" evidence="1">
    <location>
        <begin position="1"/>
        <end position="111"/>
    </location>
</feature>
<feature type="domain" description="Topo IA-type catalytic" evidence="2">
    <location>
        <begin position="132"/>
        <end position="568"/>
    </location>
</feature>
<feature type="zinc finger region" description="C4-type">
    <location>
        <begin position="600"/>
        <end position="627"/>
    </location>
</feature>
<feature type="region of interest" description="Interaction with DNA" evidence="1">
    <location>
        <begin position="166"/>
        <end position="171"/>
    </location>
</feature>
<feature type="active site" description="O-(5'-phospho-DNA)-tyrosine intermediate" evidence="2">
    <location>
        <position position="304"/>
    </location>
</feature>
<feature type="binding site" evidence="1">
    <location>
        <position position="7"/>
    </location>
    <ligand>
        <name>Mg(2+)</name>
        <dbReference type="ChEBI" id="CHEBI:18420"/>
        <note>catalytic</note>
    </ligand>
</feature>
<feature type="binding site" evidence="1">
    <location>
        <position position="80"/>
    </location>
    <ligand>
        <name>Mg(2+)</name>
        <dbReference type="ChEBI" id="CHEBI:18420"/>
        <note>catalytic</note>
    </ligand>
</feature>
<feature type="site" description="Interaction with DNA" evidence="1">
    <location>
        <position position="31"/>
    </location>
</feature>
<feature type="site" description="Interaction with DNA" evidence="1">
    <location>
        <position position="142"/>
    </location>
</feature>
<feature type="site" description="Interaction with DNA" evidence="1">
    <location>
        <position position="143"/>
    </location>
</feature>
<feature type="site" description="Interaction with DNA" evidence="1">
    <location>
        <position position="146"/>
    </location>
</feature>
<feature type="site" description="Interaction with DNA" evidence="1">
    <location>
        <position position="158"/>
    </location>
</feature>
<feature type="site" description="Interaction with DNA" evidence="1">
    <location>
        <position position="306"/>
    </location>
</feature>
<feature type="site" description="Interaction with DNA" evidence="1">
    <location>
        <position position="499"/>
    </location>
</feature>
<reference key="1">
    <citation type="journal article" date="2006" name="PLoS Genet.">
        <title>Genome sequence of Rickettsia bellii illuminates the role of amoebae in gene exchanges between intracellular pathogens.</title>
        <authorList>
            <person name="Ogata H."/>
            <person name="La Scola B."/>
            <person name="Audic S."/>
            <person name="Renesto P."/>
            <person name="Blanc G."/>
            <person name="Robert C."/>
            <person name="Fournier P.-E."/>
            <person name="Claverie J.-M."/>
            <person name="Raoult D."/>
        </authorList>
    </citation>
    <scope>NUCLEOTIDE SEQUENCE [LARGE SCALE GENOMIC DNA]</scope>
    <source>
        <strain>RML369-C</strain>
    </source>
</reference>
<dbReference type="EC" id="5.6.2.1" evidence="1"/>
<dbReference type="EMBL" id="CP000087">
    <property type="protein sequence ID" value="ABE04793.1"/>
    <property type="molecule type" value="Genomic_DNA"/>
</dbReference>
<dbReference type="RefSeq" id="WP_011477380.1">
    <property type="nucleotide sequence ID" value="NC_007940.1"/>
</dbReference>
<dbReference type="SMR" id="Q1RIM1"/>
<dbReference type="KEGG" id="rbe:RBE_0712"/>
<dbReference type="eggNOG" id="COG0550">
    <property type="taxonomic scope" value="Bacteria"/>
</dbReference>
<dbReference type="HOGENOM" id="CLU_002929_0_2_5"/>
<dbReference type="OrthoDB" id="9804262at2"/>
<dbReference type="Proteomes" id="UP000001951">
    <property type="component" value="Chromosome"/>
</dbReference>
<dbReference type="GO" id="GO:0005694">
    <property type="term" value="C:chromosome"/>
    <property type="evidence" value="ECO:0007669"/>
    <property type="project" value="InterPro"/>
</dbReference>
<dbReference type="GO" id="GO:0003677">
    <property type="term" value="F:DNA binding"/>
    <property type="evidence" value="ECO:0007669"/>
    <property type="project" value="UniProtKB-KW"/>
</dbReference>
<dbReference type="GO" id="GO:0003917">
    <property type="term" value="F:DNA topoisomerase type I (single strand cut, ATP-independent) activity"/>
    <property type="evidence" value="ECO:0007669"/>
    <property type="project" value="UniProtKB-UniRule"/>
</dbReference>
<dbReference type="GO" id="GO:0008270">
    <property type="term" value="F:zinc ion binding"/>
    <property type="evidence" value="ECO:0007669"/>
    <property type="project" value="UniProtKB-KW"/>
</dbReference>
<dbReference type="GO" id="GO:0006265">
    <property type="term" value="P:DNA topological change"/>
    <property type="evidence" value="ECO:0007669"/>
    <property type="project" value="UniProtKB-UniRule"/>
</dbReference>
<dbReference type="CDD" id="cd00186">
    <property type="entry name" value="TOP1Ac"/>
    <property type="match status" value="1"/>
</dbReference>
<dbReference type="CDD" id="cd03363">
    <property type="entry name" value="TOPRIM_TopoIA_TopoI"/>
    <property type="match status" value="1"/>
</dbReference>
<dbReference type="Gene3D" id="3.40.50.140">
    <property type="match status" value="1"/>
</dbReference>
<dbReference type="Gene3D" id="3.30.65.10">
    <property type="entry name" value="Bacterial Topoisomerase I, domain 1"/>
    <property type="match status" value="1"/>
</dbReference>
<dbReference type="Gene3D" id="1.10.460.10">
    <property type="entry name" value="Topoisomerase I, domain 2"/>
    <property type="match status" value="1"/>
</dbReference>
<dbReference type="Gene3D" id="2.70.20.10">
    <property type="entry name" value="Topoisomerase I, domain 3"/>
    <property type="match status" value="1"/>
</dbReference>
<dbReference type="Gene3D" id="1.10.290.10">
    <property type="entry name" value="Topoisomerase I, domain 4"/>
    <property type="match status" value="1"/>
</dbReference>
<dbReference type="HAMAP" id="MF_00952">
    <property type="entry name" value="Topoisom_1_prok"/>
    <property type="match status" value="1"/>
</dbReference>
<dbReference type="InterPro" id="IPR000380">
    <property type="entry name" value="Topo_IA"/>
</dbReference>
<dbReference type="InterPro" id="IPR003601">
    <property type="entry name" value="Topo_IA_2"/>
</dbReference>
<dbReference type="InterPro" id="IPR023406">
    <property type="entry name" value="Topo_IA_AS"/>
</dbReference>
<dbReference type="InterPro" id="IPR013497">
    <property type="entry name" value="Topo_IA_cen"/>
</dbReference>
<dbReference type="InterPro" id="IPR013824">
    <property type="entry name" value="Topo_IA_cen_sub1"/>
</dbReference>
<dbReference type="InterPro" id="IPR013825">
    <property type="entry name" value="Topo_IA_cen_sub2"/>
</dbReference>
<dbReference type="InterPro" id="IPR013826">
    <property type="entry name" value="Topo_IA_cen_sub3"/>
</dbReference>
<dbReference type="InterPro" id="IPR023405">
    <property type="entry name" value="Topo_IA_core_domain"/>
</dbReference>
<dbReference type="InterPro" id="IPR003602">
    <property type="entry name" value="Topo_IA_DNA-bd_dom"/>
</dbReference>
<dbReference type="InterPro" id="IPR013498">
    <property type="entry name" value="Topo_IA_Znf"/>
</dbReference>
<dbReference type="InterPro" id="IPR005733">
    <property type="entry name" value="TopoI_bac-type"/>
</dbReference>
<dbReference type="InterPro" id="IPR028612">
    <property type="entry name" value="Topoisom_1_IA"/>
</dbReference>
<dbReference type="InterPro" id="IPR025589">
    <property type="entry name" value="Toprim_C_rpt"/>
</dbReference>
<dbReference type="InterPro" id="IPR006171">
    <property type="entry name" value="TOPRIM_dom"/>
</dbReference>
<dbReference type="InterPro" id="IPR034149">
    <property type="entry name" value="TOPRIM_TopoI"/>
</dbReference>
<dbReference type="NCBIfam" id="TIGR01051">
    <property type="entry name" value="topA_bact"/>
    <property type="match status" value="1"/>
</dbReference>
<dbReference type="PANTHER" id="PTHR42785:SF1">
    <property type="entry name" value="DNA TOPOISOMERASE"/>
    <property type="match status" value="1"/>
</dbReference>
<dbReference type="PANTHER" id="PTHR42785">
    <property type="entry name" value="DNA TOPOISOMERASE, TYPE IA, CORE"/>
    <property type="match status" value="1"/>
</dbReference>
<dbReference type="Pfam" id="PF01131">
    <property type="entry name" value="Topoisom_bac"/>
    <property type="match status" value="1"/>
</dbReference>
<dbReference type="Pfam" id="PF01751">
    <property type="entry name" value="Toprim"/>
    <property type="match status" value="1"/>
</dbReference>
<dbReference type="Pfam" id="PF13368">
    <property type="entry name" value="Toprim_C_rpt"/>
    <property type="match status" value="2"/>
</dbReference>
<dbReference type="Pfam" id="PF01396">
    <property type="entry name" value="Zn_ribbon_Top1"/>
    <property type="match status" value="1"/>
</dbReference>
<dbReference type="PRINTS" id="PR00417">
    <property type="entry name" value="PRTPISMRASEI"/>
</dbReference>
<dbReference type="SMART" id="SM00437">
    <property type="entry name" value="TOP1Ac"/>
    <property type="match status" value="1"/>
</dbReference>
<dbReference type="SMART" id="SM00436">
    <property type="entry name" value="TOP1Bc"/>
    <property type="match status" value="1"/>
</dbReference>
<dbReference type="SMART" id="SM00493">
    <property type="entry name" value="TOPRIM"/>
    <property type="match status" value="1"/>
</dbReference>
<dbReference type="SUPFAM" id="SSF56712">
    <property type="entry name" value="Prokaryotic type I DNA topoisomerase"/>
    <property type="match status" value="1"/>
</dbReference>
<dbReference type="SUPFAM" id="SSF57783">
    <property type="entry name" value="Zinc beta-ribbon"/>
    <property type="match status" value="1"/>
</dbReference>
<dbReference type="PROSITE" id="PS00396">
    <property type="entry name" value="TOPO_IA_1"/>
    <property type="match status" value="1"/>
</dbReference>
<dbReference type="PROSITE" id="PS52039">
    <property type="entry name" value="TOPO_IA_2"/>
    <property type="match status" value="1"/>
</dbReference>
<dbReference type="PROSITE" id="PS50880">
    <property type="entry name" value="TOPRIM"/>
    <property type="match status" value="1"/>
</dbReference>
<sequence>MKLVIVESPAKAKTINKYLGDEFKVIASFGHIRDLPSKKGSVIPDENFSMKYDISEKAGKYVDAIIKDAKKAESVYLATDPDREGESISWHIAEVIKEKNKVKSDDFFKRVAFNEITKKAITHAIENPRKLDNNLVNAQQARRALDYLVGFTLSPLLWRKLPGCKSAGRVQSVALRLICEREDEIERFKSEEYWDISLKMLNSNNELFTAKLTHINDQKLEKFSITNDKEAKDLTEKLKSQNFHVDKIEKKQQKRQPQPPFITSSLQQEAARKLGFSAKKTMQIAQKLYEGVDIGKETIGLITYMRTDGVTLSNDAVDEIRKLINKDYGDKYLPSSPRIYKSKVKNAQEAHEAIRPTNINYIPNDLKEKLEKDYYKLYELIWKRTIACQMENVIMDLVNATLASENKEYLARANGSTIAFDGFYKVYRESIDDEAEEENKMLPPLKEQEHLKTKEIIPNQHFTEPPPRYSEASLVKKLEELGIGRPSTYATILSVLQDRKYVTLEKKRFIPEELGRLVTVFLVGFFKKYVEYDFTAGLENELDEIAAGKLEWKSALGNFWNGFNHNIESVNKQNITEIISYVQQALDYHIFGENKDSKVCPSCKTGELSLKLGKFGAFLACSNYPECNFRKSIVSGNDNNEADGEAKDIVNENKVLGKDKEGIEIYLKKGPYGPYIQYGEQVDSKIKPKRSPLPAGLNQNDITLDMALKLLSLPLKIGNHKESGEEVLVGYGKFGPYIKYMGKFISIPKKYDFLNLSLDDAMKLIEEKLNAIAAKQPNPLNMDEVTNLVDKKIKVKKTKK</sequence>
<accession>Q1RIM1</accession>
<protein>
    <recommendedName>
        <fullName evidence="1">DNA topoisomerase 1</fullName>
        <ecNumber evidence="1">5.6.2.1</ecNumber>
    </recommendedName>
    <alternativeName>
        <fullName evidence="1">DNA topoisomerase I</fullName>
    </alternativeName>
    <alternativeName>
        <fullName>Omega-protein</fullName>
    </alternativeName>
    <alternativeName>
        <fullName>Relaxing enzyme</fullName>
    </alternativeName>
    <alternativeName>
        <fullName>Swivelase</fullName>
    </alternativeName>
    <alternativeName>
        <fullName>Untwisting enzyme</fullName>
    </alternativeName>
</protein>
<keyword id="KW-0238">DNA-binding</keyword>
<keyword id="KW-0413">Isomerase</keyword>
<keyword id="KW-0460">Magnesium</keyword>
<keyword id="KW-0479">Metal-binding</keyword>
<keyword id="KW-0799">Topoisomerase</keyword>
<keyword id="KW-0862">Zinc</keyword>
<keyword id="KW-0863">Zinc-finger</keyword>
<gene>
    <name evidence="1" type="primary">topA</name>
    <name type="ordered locus">RBE_0712</name>
</gene>
<organism>
    <name type="scientific">Rickettsia bellii (strain RML369-C)</name>
    <dbReference type="NCBI Taxonomy" id="336407"/>
    <lineage>
        <taxon>Bacteria</taxon>
        <taxon>Pseudomonadati</taxon>
        <taxon>Pseudomonadota</taxon>
        <taxon>Alphaproteobacteria</taxon>
        <taxon>Rickettsiales</taxon>
        <taxon>Rickettsiaceae</taxon>
        <taxon>Rickettsieae</taxon>
        <taxon>Rickettsia</taxon>
        <taxon>belli group</taxon>
    </lineage>
</organism>
<proteinExistence type="inferred from homology"/>
<name>TOP1_RICBR</name>
<evidence type="ECO:0000255" key="1">
    <source>
        <dbReference type="HAMAP-Rule" id="MF_00952"/>
    </source>
</evidence>
<evidence type="ECO:0000255" key="2">
    <source>
        <dbReference type="PROSITE-ProRule" id="PRU01383"/>
    </source>
</evidence>